<keyword id="KW-0275">Fatty acid biosynthesis</keyword>
<keyword id="KW-0276">Fatty acid metabolism</keyword>
<keyword id="KW-0444">Lipid biosynthesis</keyword>
<keyword id="KW-0443">Lipid metabolism</keyword>
<keyword id="KW-0472">Membrane</keyword>
<keyword id="KW-0560">Oxidoreductase</keyword>
<keyword id="KW-0812">Transmembrane</keyword>
<keyword id="KW-1133">Transmembrane helix</keyword>
<comment type="function">
    <text evidence="5">Desaturase involved in the biosynthesis of (5Z)-icos-5-enoate, an unusual monounsaturated fatty acid that makes up to 60% of the total fatty acids in Limnanthes sp. seed oil. Only acts on saturated fatty acids.</text>
</comment>
<comment type="catalytic activity">
    <reaction evidence="5">
        <text>eicosanoyl-CoA + 2 Fe(II)-[cytochrome b5] + O2 + 2 H(+) = (5Z)-eicosenoyl-CoA + 2 Fe(III)-[cytochrome b5] + 2 H2O</text>
        <dbReference type="Rhea" id="RHEA:45464"/>
        <dbReference type="Rhea" id="RHEA-COMP:10438"/>
        <dbReference type="Rhea" id="RHEA-COMP:10439"/>
        <dbReference type="ChEBI" id="CHEBI:15377"/>
        <dbReference type="ChEBI" id="CHEBI:15378"/>
        <dbReference type="ChEBI" id="CHEBI:15379"/>
        <dbReference type="ChEBI" id="CHEBI:29033"/>
        <dbReference type="ChEBI" id="CHEBI:29034"/>
        <dbReference type="ChEBI" id="CHEBI:57380"/>
        <dbReference type="ChEBI" id="CHEBI:85268"/>
        <dbReference type="EC" id="1.14.19.10"/>
    </reaction>
</comment>
<comment type="cofactor">
    <cofactor evidence="1">
        <name>Fe(2+)</name>
        <dbReference type="ChEBI" id="CHEBI:29033"/>
    </cofactor>
</comment>
<comment type="pathway">
    <text evidence="5">Lipid metabolism; monounsaturated fatty acid biosynthesis.</text>
</comment>
<comment type="subcellular location">
    <subcellularLocation>
        <location evidence="2">Membrane</location>
        <topology evidence="2">Multi-pass membrane protein</topology>
    </subcellularLocation>
</comment>
<comment type="domain">
    <text evidence="3">The histidine box domains may contain the active site and/or be involved in metal ion binding.</text>
</comment>
<comment type="similarity">
    <text evidence="7">Belongs to the fatty acid desaturase type 1 family.</text>
</comment>
<organism>
    <name type="scientific">Limnanthes douglasii</name>
    <name type="common">Douglas' meadowfoam</name>
    <dbReference type="NCBI Taxonomy" id="28973"/>
    <lineage>
        <taxon>Eukaryota</taxon>
        <taxon>Viridiplantae</taxon>
        <taxon>Streptophyta</taxon>
        <taxon>Embryophyta</taxon>
        <taxon>Tracheophyta</taxon>
        <taxon>Spermatophyta</taxon>
        <taxon>Magnoliopsida</taxon>
        <taxon>eudicotyledons</taxon>
        <taxon>Gunneridae</taxon>
        <taxon>Pentapetalae</taxon>
        <taxon>rosids</taxon>
        <taxon>malvids</taxon>
        <taxon>Brassicales</taxon>
        <taxon>Limnanthaceae</taxon>
        <taxon>Limnanthes</taxon>
    </lineage>
</organism>
<accession>Q9FV68</accession>
<name>ICO5D_LIMDO</name>
<protein>
    <recommendedName>
        <fullName evidence="7">Icosanoyl-CoA 5-desaturase</fullName>
        <ecNumber>1.14.19.10</ecNumber>
    </recommendedName>
    <alternativeName>
        <fullName evidence="6">Delta(5) acyl-CoA desaturase</fullName>
    </alternativeName>
</protein>
<evidence type="ECO:0000250" key="1">
    <source>
        <dbReference type="UniProtKB" id="P22337"/>
    </source>
</evidence>
<evidence type="ECO:0000255" key="2"/>
<evidence type="ECO:0000255" key="3">
    <source>
        <dbReference type="RuleBase" id="RU000581"/>
    </source>
</evidence>
<evidence type="ECO:0000256" key="4">
    <source>
        <dbReference type="SAM" id="MobiDB-lite"/>
    </source>
</evidence>
<evidence type="ECO:0000269" key="5">
    <source>
    </source>
</evidence>
<evidence type="ECO:0000303" key="6">
    <source>
    </source>
</evidence>
<evidence type="ECO:0000305" key="7"/>
<feature type="chain" id="PRO_0000433902" description="Icosanoyl-CoA 5-desaturase">
    <location>
        <begin position="1" status="less than"/>
        <end position="356"/>
    </location>
</feature>
<feature type="transmembrane region" description="Helical" evidence="2">
    <location>
        <begin position="5"/>
        <end position="25"/>
    </location>
</feature>
<feature type="transmembrane region" description="Helical" evidence="2">
    <location>
        <begin position="88"/>
        <end position="108"/>
    </location>
</feature>
<feature type="transmembrane region" description="Helical" evidence="2">
    <location>
        <begin position="111"/>
        <end position="131"/>
    </location>
</feature>
<feature type="transmembrane region" description="Helical" evidence="2">
    <location>
        <begin position="236"/>
        <end position="256"/>
    </location>
</feature>
<feature type="region of interest" description="Disordered" evidence="4">
    <location>
        <begin position="38"/>
        <end position="58"/>
    </location>
</feature>
<feature type="short sequence motif" description="Histidine box-1" evidence="2">
    <location>
        <begin position="132"/>
        <end position="137"/>
    </location>
</feature>
<feature type="short sequence motif" description="Histidine box-2" evidence="2">
    <location>
        <begin position="169"/>
        <end position="173"/>
    </location>
</feature>
<feature type="short sequence motif" description="Histidine box-3" evidence="2">
    <location>
        <begin position="302"/>
        <end position="306"/>
    </location>
</feature>
<feature type="compositionally biased region" description="Basic and acidic residues" evidence="4">
    <location>
        <begin position="42"/>
        <end position="58"/>
    </location>
</feature>
<feature type="non-terminal residue" evidence="7">
    <location>
        <position position="1"/>
    </location>
</feature>
<reference key="1">
    <citation type="journal article" date="2000" name="Plant Physiol.">
        <title>Production of fatty acid components of meadowfoam oil in somatic soybean embryos.</title>
        <authorList>
            <person name="Cahoon E.B."/>
            <person name="Marillia E.F."/>
            <person name="Stecca K.L."/>
            <person name="Hall S.E."/>
            <person name="Taylor D.C."/>
            <person name="Kinney A.J."/>
        </authorList>
    </citation>
    <scope>NUCLEOTIDE SEQUENCE [MRNA]</scope>
    <scope>FUNCTION</scope>
    <scope>CATALYTIC ACTIVITY</scope>
    <scope>PATHWAY</scope>
</reference>
<sequence>LRLSLYFPISISLSLSLEAMASFIATTTPAMPAFASVLDPKIPTKPEPKTETPKPKDDLERFRTSEVVLERKAKGFWRRKWNPRDIQNAVTLLVLHALAAMAPFYFSWDAFWISFILLGFASGVLGITLCFHRCLTHGGFKLPKLVEYFFAYCGSLALQGDPMEWVSNHRYHHQFVDTERDVHSPTQGFWFCHIGWVLDKDLFVEKRGGRRNNVNDLKKQAFYRFLQKTYMYHQLALIALLYYVGGFPYIVWGMGFRLVFMFHSTFAINSVCHKWGGRPWNTGDLSTNNMFVALCAFGEGWHNNHHAFEQSARHGLEWWEIDVTWYVIRTLQAIGLATNVKLPTEAQKQKLKAKSA</sequence>
<proteinExistence type="evidence at protein level"/>
<dbReference type="EC" id="1.14.19.10"/>
<dbReference type="EMBL" id="AF247133">
    <property type="protein sequence ID" value="AAG28599.1"/>
    <property type="molecule type" value="mRNA"/>
</dbReference>
<dbReference type="SMR" id="Q9FV68"/>
<dbReference type="KEGG" id="ag:AAG28599"/>
<dbReference type="BioCyc" id="MetaCyc:MONOMER-12558"/>
<dbReference type="UniPathway" id="UPA01038"/>
<dbReference type="GO" id="GO:0005789">
    <property type="term" value="C:endoplasmic reticulum membrane"/>
    <property type="evidence" value="ECO:0007669"/>
    <property type="project" value="TreeGrafter"/>
</dbReference>
<dbReference type="GO" id="GO:0016717">
    <property type="term" value="F:oxidoreductase activity, acting on paired donors, with oxidation of a pair of donors resulting in the reduction of molecular oxygen to two molecules of water"/>
    <property type="evidence" value="ECO:0000314"/>
    <property type="project" value="UniProtKB"/>
</dbReference>
<dbReference type="GO" id="GO:0006633">
    <property type="term" value="P:fatty acid biosynthetic process"/>
    <property type="evidence" value="ECO:0000314"/>
    <property type="project" value="UniProtKB"/>
</dbReference>
<dbReference type="GO" id="GO:0042761">
    <property type="term" value="P:very long-chain fatty acid biosynthetic process"/>
    <property type="evidence" value="ECO:0007669"/>
    <property type="project" value="TreeGrafter"/>
</dbReference>
<dbReference type="CDD" id="cd03505">
    <property type="entry name" value="Delta9-FADS-like"/>
    <property type="match status" value="1"/>
</dbReference>
<dbReference type="InterPro" id="IPR015876">
    <property type="entry name" value="Acyl-CoA_DS"/>
</dbReference>
<dbReference type="InterPro" id="IPR005804">
    <property type="entry name" value="FA_desaturase_dom"/>
</dbReference>
<dbReference type="PANTHER" id="PTHR11351">
    <property type="entry name" value="ACYL-COA DESATURASE"/>
    <property type="match status" value="1"/>
</dbReference>
<dbReference type="PANTHER" id="PTHR11351:SF87">
    <property type="entry name" value="LIPID DESATURASE ADS3.2, CHLOROPLASTIC-RELATED"/>
    <property type="match status" value="1"/>
</dbReference>
<dbReference type="Pfam" id="PF00487">
    <property type="entry name" value="FA_desaturase"/>
    <property type="match status" value="1"/>
</dbReference>
<dbReference type="PRINTS" id="PR00075">
    <property type="entry name" value="FACDDSATRASE"/>
</dbReference>